<organism>
    <name type="scientific">Staphylococcus aureus (strain NCTC 8325 / PS 47)</name>
    <dbReference type="NCBI Taxonomy" id="93061"/>
    <lineage>
        <taxon>Bacteria</taxon>
        <taxon>Bacillati</taxon>
        <taxon>Bacillota</taxon>
        <taxon>Bacilli</taxon>
        <taxon>Bacillales</taxon>
        <taxon>Staphylococcaceae</taxon>
        <taxon>Staphylococcus</taxon>
    </lineage>
</organism>
<sequence length="532" mass="60077">MRKLTKMSAMLLASGLILTGCGGNKGLEEKKENKQLTYTTVKDIGDMNPHVYGGSMSAESMIYEPLVRNTKDGIKPLLAKKWDVSEDGKTYTFHLRDDVKFHDGTPFDADAVKKNIDAVQENKKLHSWLKISTLIDNVKVKDKYTVELNLKEAYQPALAELAMPRPYVFVSPKDFKNGTTKDGVKKFDGTGPFKLGEHKKDESADFNKNDQYWGEKSKLNKVQAKVMPAGETAFLSMKKGETNFAFTDDRGTDSLDKDSLKQLKDTGDYQVKRSQPMNTKMLVVNSGKKDNAVSDKTVRQAIGHMVNRDKIAKEILDGQEKPATQLFAKNVTDINFDMPTRKYDLKKAESLLDEAGWKKGKDSDVRQKDGKNLEMAMYYDKGSSSQKEQAEYLQAEFKKMGIKLNINGETSDKIAERRTSGDYDLMFNQTWGLLYDPQSTIAAFKEKNGYESATSGIENKDKIYNSIDDAFKIQNGKERSDAYKNILKQIDDEGIFIPISHGSMTVVAPKDLEKVSFTQSQYELPFNEMQYK</sequence>
<keyword id="KW-0002">3D-structure</keyword>
<keyword id="KW-1003">Cell membrane</keyword>
<keyword id="KW-0170">Cobalt</keyword>
<keyword id="KW-0171">Cobalt transport</keyword>
<keyword id="KW-0406">Ion transport</keyword>
<keyword id="KW-0449">Lipoprotein</keyword>
<keyword id="KW-0472">Membrane</keyword>
<keyword id="KW-0533">Nickel</keyword>
<keyword id="KW-0921">Nickel transport</keyword>
<keyword id="KW-0564">Palmitate</keyword>
<keyword id="KW-1185">Reference proteome</keyword>
<keyword id="KW-0732">Signal</keyword>
<keyword id="KW-0813">Transport</keyword>
<keyword id="KW-0862">Zinc</keyword>
<keyword id="KW-0864">Zinc transport</keyword>
<accession>Q2FVE7</accession>
<accession>Q9ZGP2</accession>
<feature type="signal peptide" evidence="1">
    <location>
        <begin position="1"/>
        <end position="20"/>
    </location>
</feature>
<feature type="chain" id="PRO_5004208116" description="Metal-staphylopine-binding protein CntA" evidence="1">
    <location>
        <begin position="21"/>
        <end position="532"/>
    </location>
</feature>
<feature type="binding site" evidence="3 12 13 14">
    <location>
        <position position="165"/>
    </location>
    <ligand>
        <name>staphylopine</name>
        <dbReference type="ChEBI" id="CHEBI:141669"/>
    </ligand>
</feature>
<feature type="binding site" evidence="3 12 13 14">
    <location>
        <position position="418"/>
    </location>
    <ligand>
        <name>staphylopine</name>
        <dbReference type="ChEBI" id="CHEBI:141669"/>
    </ligand>
</feature>
<feature type="binding site" evidence="3 12 13 14">
    <location>
        <position position="448"/>
    </location>
    <ligand>
        <name>staphylopine</name>
        <dbReference type="ChEBI" id="CHEBI:141669"/>
    </ligand>
</feature>
<feature type="lipid moiety-binding region" description="N-palmitoyl cysteine" evidence="1">
    <location>
        <position position="21"/>
    </location>
</feature>
<feature type="lipid moiety-binding region" description="S-diacylglycerol cysteine" evidence="1">
    <location>
        <position position="21"/>
    </location>
</feature>
<feature type="mutagenesis site" description="Strong decrease in StP/metal binding." evidence="3">
    <original>Y</original>
    <variation>A</variation>
    <location>
        <position position="52"/>
    </location>
</feature>
<feature type="mutagenesis site" description="Strong decrease in StP/metal binding." evidence="3">
    <original>W</original>
    <variation>A</variation>
    <location>
        <position position="128"/>
    </location>
</feature>
<feature type="mutagenesis site" description="Does not bind StP/metal. Significantly reduces metal accumulation." evidence="3">
    <original>R</original>
    <variation>A</variation>
    <location>
        <position position="165"/>
    </location>
</feature>
<feature type="mutagenesis site" description="Does not bind StP/metal." evidence="3">
    <original>R</original>
    <variation>A</variation>
    <location>
        <position position="250"/>
    </location>
</feature>
<feature type="mutagenesis site" description="Does not bind StP/metal." evidence="3">
    <original>R</original>
    <variation>A</variation>
    <location>
        <position position="418"/>
    </location>
</feature>
<feature type="mutagenesis site" description="Does not bind StP/metal. Significantly reduces metal accumulation." evidence="3">
    <original>W</original>
    <variation>A</variation>
    <location>
        <position position="431"/>
    </location>
</feature>
<feature type="mutagenesis site" description="Strong decrease in StP/metal binding. Slightly reduces metal accumulation." evidence="3">
    <original>Y</original>
    <variation>A</variation>
    <location>
        <position position="435"/>
    </location>
</feature>
<feature type="mutagenesis site" description="Slight decrease in StP/metal binding. Slightly reduces metal accumulation." evidence="3">
    <original>N</original>
    <variation>A</variation>
    <location>
        <position position="448"/>
    </location>
</feature>
<feature type="mutagenesis site" description="Does not bind StP/metal." evidence="3">
    <original>Y</original>
    <variation>A</variation>
    <location>
        <position position="522"/>
    </location>
</feature>
<feature type="sequence conflict" description="In Ref. 2; AAC69837." evidence="7" ref="2">
    <original>GLEEKKE</original>
    <variation>DSLGRKR</variation>
    <location>
        <begin position="26"/>
        <end position="32"/>
    </location>
</feature>
<feature type="helix" evidence="17">
    <location>
        <begin position="27"/>
        <end position="32"/>
    </location>
</feature>
<feature type="strand" evidence="17">
    <location>
        <begin position="35"/>
        <end position="42"/>
    </location>
</feature>
<feature type="strand" evidence="15">
    <location>
        <begin position="51"/>
        <end position="54"/>
    </location>
</feature>
<feature type="helix" evidence="17">
    <location>
        <begin position="56"/>
        <end position="62"/>
    </location>
</feature>
<feature type="strand" evidence="17">
    <location>
        <begin position="66"/>
        <end position="70"/>
    </location>
</feature>
<feature type="strand" evidence="17">
    <location>
        <begin position="73"/>
        <end position="84"/>
    </location>
</feature>
<feature type="strand" evidence="16">
    <location>
        <begin position="86"/>
        <end position="88"/>
    </location>
</feature>
<feature type="strand" evidence="17">
    <location>
        <begin position="90"/>
        <end position="95"/>
    </location>
</feature>
<feature type="helix" evidence="17">
    <location>
        <begin position="109"/>
        <end position="120"/>
    </location>
</feature>
<feature type="helix" evidence="17">
    <location>
        <begin position="121"/>
        <end position="126"/>
    </location>
</feature>
<feature type="helix" evidence="17">
    <location>
        <begin position="131"/>
        <end position="134"/>
    </location>
</feature>
<feature type="strand" evidence="17">
    <location>
        <begin position="135"/>
        <end position="142"/>
    </location>
</feature>
<feature type="strand" evidence="17">
    <location>
        <begin position="145"/>
        <end position="152"/>
    </location>
</feature>
<feature type="helix" evidence="17">
    <location>
        <begin position="157"/>
        <end position="161"/>
    </location>
</feature>
<feature type="strand" evidence="17">
    <location>
        <begin position="163"/>
        <end position="167"/>
    </location>
</feature>
<feature type="helix" evidence="17">
    <location>
        <begin position="172"/>
        <end position="174"/>
    </location>
</feature>
<feature type="strand" evidence="17">
    <location>
        <begin position="179"/>
        <end position="186"/>
    </location>
</feature>
<feature type="strand" evidence="17">
    <location>
        <begin position="190"/>
        <end position="199"/>
    </location>
</feature>
<feature type="turn" evidence="17">
    <location>
        <begin position="200"/>
        <end position="202"/>
    </location>
</feature>
<feature type="strand" evidence="17">
    <location>
        <begin position="203"/>
        <end position="208"/>
    </location>
</feature>
<feature type="strand" evidence="17">
    <location>
        <begin position="213"/>
        <end position="215"/>
    </location>
</feature>
<feature type="strand" evidence="17">
    <location>
        <begin position="218"/>
        <end position="226"/>
    </location>
</feature>
<feature type="helix" evidence="17">
    <location>
        <begin position="231"/>
        <end position="238"/>
    </location>
</feature>
<feature type="strand" evidence="17">
    <location>
        <begin position="244"/>
        <end position="246"/>
    </location>
</feature>
<feature type="helix" evidence="17">
    <location>
        <begin position="257"/>
        <end position="265"/>
    </location>
</feature>
<feature type="strand" evidence="17">
    <location>
        <begin position="267"/>
        <end position="284"/>
    </location>
</feature>
<feature type="helix" evidence="17">
    <location>
        <begin position="292"/>
        <end position="294"/>
    </location>
</feature>
<feature type="helix" evidence="17">
    <location>
        <begin position="296"/>
        <end position="303"/>
    </location>
</feature>
<feature type="helix" evidence="17">
    <location>
        <begin position="308"/>
        <end position="314"/>
    </location>
</feature>
<feature type="turn" evidence="15">
    <location>
        <begin position="315"/>
        <end position="318"/>
    </location>
</feature>
<feature type="strand" evidence="15">
    <location>
        <begin position="319"/>
        <end position="322"/>
    </location>
</feature>
<feature type="strand" evidence="17">
    <location>
        <begin position="324"/>
        <end position="327"/>
    </location>
</feature>
<feature type="turn" evidence="17">
    <location>
        <begin position="332"/>
        <end position="334"/>
    </location>
</feature>
<feature type="helix" evidence="17">
    <location>
        <begin position="345"/>
        <end position="354"/>
    </location>
</feature>
<feature type="strand" evidence="16">
    <location>
        <begin position="365"/>
        <end position="368"/>
    </location>
</feature>
<feature type="strand" evidence="17">
    <location>
        <begin position="374"/>
        <end position="380"/>
    </location>
</feature>
<feature type="helix" evidence="17">
    <location>
        <begin position="384"/>
        <end position="399"/>
    </location>
</feature>
<feature type="strand" evidence="17">
    <location>
        <begin position="403"/>
        <end position="409"/>
    </location>
</feature>
<feature type="helix" evidence="17">
    <location>
        <begin position="411"/>
        <end position="420"/>
    </location>
</feature>
<feature type="strand" evidence="17">
    <location>
        <begin position="424"/>
        <end position="429"/>
    </location>
</feature>
<feature type="turn" evidence="17">
    <location>
        <begin position="433"/>
        <end position="437"/>
    </location>
</feature>
<feature type="helix" evidence="17">
    <location>
        <begin position="438"/>
        <end position="442"/>
    </location>
</feature>
<feature type="helix" evidence="17">
    <location>
        <begin position="443"/>
        <end position="445"/>
    </location>
</feature>
<feature type="turn" evidence="17">
    <location>
        <begin position="447"/>
        <end position="450"/>
    </location>
</feature>
<feature type="helix" evidence="17">
    <location>
        <begin position="451"/>
        <end position="454"/>
    </location>
</feature>
<feature type="helix" evidence="17">
    <location>
        <begin position="460"/>
        <end position="470"/>
    </location>
</feature>
<feature type="helix" evidence="17">
    <location>
        <begin position="476"/>
        <end position="493"/>
    </location>
</feature>
<feature type="strand" evidence="17">
    <location>
        <begin position="496"/>
        <end position="509"/>
    </location>
</feature>
<feature type="turn" evidence="17">
    <location>
        <begin position="526"/>
        <end position="528"/>
    </location>
</feature>
<evidence type="ECO:0000255" key="1">
    <source>
        <dbReference type="PROSITE-ProRule" id="PRU00303"/>
    </source>
</evidence>
<evidence type="ECO:0000269" key="2">
    <source>
    </source>
</evidence>
<evidence type="ECO:0000269" key="3">
    <source>
    </source>
</evidence>
<evidence type="ECO:0000269" key="4">
    <source>
    </source>
</evidence>
<evidence type="ECO:0000303" key="5">
    <source>
    </source>
</evidence>
<evidence type="ECO:0000303" key="6">
    <source>
    </source>
</evidence>
<evidence type="ECO:0000305" key="7"/>
<evidence type="ECO:0000305" key="8">
    <source>
    </source>
</evidence>
<evidence type="ECO:0000305" key="9">
    <source>
    </source>
</evidence>
<evidence type="ECO:0000312" key="10">
    <source>
        <dbReference type="EMBL" id="ABD31771.1"/>
    </source>
</evidence>
<evidence type="ECO:0007744" key="11">
    <source>
        <dbReference type="PDB" id="5YH5"/>
    </source>
</evidence>
<evidence type="ECO:0007744" key="12">
    <source>
        <dbReference type="PDB" id="5YH8"/>
    </source>
</evidence>
<evidence type="ECO:0007744" key="13">
    <source>
        <dbReference type="PDB" id="5YHE"/>
    </source>
</evidence>
<evidence type="ECO:0007744" key="14">
    <source>
        <dbReference type="PDB" id="5YHG"/>
    </source>
</evidence>
<evidence type="ECO:0007829" key="15">
    <source>
        <dbReference type="PDB" id="5YH5"/>
    </source>
</evidence>
<evidence type="ECO:0007829" key="16">
    <source>
        <dbReference type="PDB" id="5YHE"/>
    </source>
</evidence>
<evidence type="ECO:0007829" key="17">
    <source>
        <dbReference type="PDB" id="5YHG"/>
    </source>
</evidence>
<name>CNTA_STAA8</name>
<gene>
    <name evidence="5" type="primary">cntA</name>
    <name evidence="6" type="synonym">opp-1A</name>
    <name evidence="5" type="synonym">opp1A</name>
    <name evidence="10" type="ordered locus">SAOUHSC_02767</name>
</gene>
<protein>
    <recommendedName>
        <fullName evidence="7">Metal-staphylopine-binding protein CntA</fullName>
    </recommendedName>
</protein>
<proteinExistence type="evidence at protein level"/>
<dbReference type="EMBL" id="CP000253">
    <property type="protein sequence ID" value="ABD31771.1"/>
    <property type="molecule type" value="Genomic_DNA"/>
</dbReference>
<dbReference type="EMBL" id="AF076683">
    <property type="protein sequence ID" value="AAC69837.1"/>
    <property type="molecule type" value="Genomic_DNA"/>
</dbReference>
<dbReference type="RefSeq" id="WP_001229079.1">
    <property type="nucleotide sequence ID" value="NZ_LS483365.1"/>
</dbReference>
<dbReference type="RefSeq" id="YP_501226.1">
    <property type="nucleotide sequence ID" value="NC_007795.1"/>
</dbReference>
<dbReference type="PDB" id="5YH5">
    <property type="method" value="X-ray"/>
    <property type="resolution" value="2.90 A"/>
    <property type="chains" value="A=26-532"/>
</dbReference>
<dbReference type="PDB" id="5YH8">
    <property type="method" value="X-ray"/>
    <property type="resolution" value="2.12 A"/>
    <property type="chains" value="A=26-532"/>
</dbReference>
<dbReference type="PDB" id="5YHE">
    <property type="method" value="X-ray"/>
    <property type="resolution" value="2.46 A"/>
    <property type="chains" value="A/B=26-532"/>
</dbReference>
<dbReference type="PDB" id="5YHG">
    <property type="method" value="X-ray"/>
    <property type="resolution" value="2.03 A"/>
    <property type="chains" value="A=26-532"/>
</dbReference>
<dbReference type="PDBsum" id="5YH5"/>
<dbReference type="PDBsum" id="5YH8"/>
<dbReference type="PDBsum" id="5YHE"/>
<dbReference type="PDBsum" id="5YHG"/>
<dbReference type="SMR" id="Q2FVE7"/>
<dbReference type="STRING" id="93061.SAOUHSC_02767"/>
<dbReference type="TCDB" id="3.A.1.5.43">
    <property type="family name" value="the atp-binding cassette (abc) superfamily"/>
</dbReference>
<dbReference type="PaxDb" id="1280-SAXN108_2721"/>
<dbReference type="GeneID" id="3921422"/>
<dbReference type="KEGG" id="sao:SAOUHSC_02767"/>
<dbReference type="PATRIC" id="fig|93061.5.peg.2502"/>
<dbReference type="eggNOG" id="COG0747">
    <property type="taxonomic scope" value="Bacteria"/>
</dbReference>
<dbReference type="HOGENOM" id="CLU_017028_7_5_9"/>
<dbReference type="OrthoDB" id="9771733at2"/>
<dbReference type="Proteomes" id="UP000008816">
    <property type="component" value="Chromosome"/>
</dbReference>
<dbReference type="GO" id="GO:0043190">
    <property type="term" value="C:ATP-binding cassette (ABC) transporter complex"/>
    <property type="evidence" value="ECO:0007669"/>
    <property type="project" value="InterPro"/>
</dbReference>
<dbReference type="GO" id="GO:0030288">
    <property type="term" value="C:outer membrane-bounded periplasmic space"/>
    <property type="evidence" value="ECO:0000318"/>
    <property type="project" value="GO_Central"/>
</dbReference>
<dbReference type="GO" id="GO:0020037">
    <property type="term" value="F:heme binding"/>
    <property type="evidence" value="ECO:0007669"/>
    <property type="project" value="InterPro"/>
</dbReference>
<dbReference type="GO" id="GO:0016151">
    <property type="term" value="F:nickel cation binding"/>
    <property type="evidence" value="ECO:0007669"/>
    <property type="project" value="InterPro"/>
</dbReference>
<dbReference type="GO" id="GO:1904680">
    <property type="term" value="F:peptide transmembrane transporter activity"/>
    <property type="evidence" value="ECO:0000318"/>
    <property type="project" value="GO_Central"/>
</dbReference>
<dbReference type="GO" id="GO:0006824">
    <property type="term" value="P:cobalt ion transport"/>
    <property type="evidence" value="ECO:0007669"/>
    <property type="project" value="UniProtKB-KW"/>
</dbReference>
<dbReference type="GO" id="GO:0015675">
    <property type="term" value="P:nickel cation transport"/>
    <property type="evidence" value="ECO:0007669"/>
    <property type="project" value="UniProtKB-KW"/>
</dbReference>
<dbReference type="GO" id="GO:0015833">
    <property type="term" value="P:peptide transport"/>
    <property type="evidence" value="ECO:0000318"/>
    <property type="project" value="GO_Central"/>
</dbReference>
<dbReference type="GO" id="GO:0006829">
    <property type="term" value="P:zinc ion transport"/>
    <property type="evidence" value="ECO:0007669"/>
    <property type="project" value="UniProtKB-KW"/>
</dbReference>
<dbReference type="CDD" id="cd08489">
    <property type="entry name" value="PBP2_NikA"/>
    <property type="match status" value="1"/>
</dbReference>
<dbReference type="Gene3D" id="3.10.105.10">
    <property type="entry name" value="Dipeptide-binding Protein, Domain 3"/>
    <property type="match status" value="1"/>
</dbReference>
<dbReference type="Gene3D" id="3.40.190.10">
    <property type="entry name" value="Periplasmic binding protein-like II"/>
    <property type="match status" value="1"/>
</dbReference>
<dbReference type="InterPro" id="IPR011980">
    <property type="entry name" value="CntA-like"/>
</dbReference>
<dbReference type="InterPro" id="IPR030678">
    <property type="entry name" value="Peptide/Ni-bd"/>
</dbReference>
<dbReference type="InterPro" id="IPR039424">
    <property type="entry name" value="SBP_5"/>
</dbReference>
<dbReference type="InterPro" id="IPR023765">
    <property type="entry name" value="SBP_5_CS"/>
</dbReference>
<dbReference type="InterPro" id="IPR000914">
    <property type="entry name" value="SBP_5_dom"/>
</dbReference>
<dbReference type="NCBIfam" id="TIGR02294">
    <property type="entry name" value="nickel_nikA"/>
    <property type="match status" value="1"/>
</dbReference>
<dbReference type="NCBIfam" id="NF047575">
    <property type="entry name" value="opine_bind_CntA"/>
    <property type="match status" value="1"/>
</dbReference>
<dbReference type="PANTHER" id="PTHR30290:SF37">
    <property type="entry name" value="NICKEL-BINDING PERIPLASMIC PROTEIN"/>
    <property type="match status" value="1"/>
</dbReference>
<dbReference type="PANTHER" id="PTHR30290">
    <property type="entry name" value="PERIPLASMIC BINDING COMPONENT OF ABC TRANSPORTER"/>
    <property type="match status" value="1"/>
</dbReference>
<dbReference type="Pfam" id="PF00496">
    <property type="entry name" value="SBP_bac_5"/>
    <property type="match status" value="1"/>
</dbReference>
<dbReference type="PIRSF" id="PIRSF002741">
    <property type="entry name" value="MppA"/>
    <property type="match status" value="1"/>
</dbReference>
<dbReference type="SUPFAM" id="SSF53850">
    <property type="entry name" value="Periplasmic binding protein-like II"/>
    <property type="match status" value="1"/>
</dbReference>
<dbReference type="PROSITE" id="PS51257">
    <property type="entry name" value="PROKAR_LIPOPROTEIN"/>
    <property type="match status" value="1"/>
</dbReference>
<dbReference type="PROSITE" id="PS01040">
    <property type="entry name" value="SBP_BACTERIAL_5"/>
    <property type="match status" value="1"/>
</dbReference>
<comment type="function">
    <text evidence="2 3">Part of the ABC transporter complex CntABCDF (Opp1) involved in the uptake of metal in complex with the metallophore staphylopine (StP). Involved in the import of divalent metals ions such as nickel, cobalt and zinc. Binds the metal via the metallophore StP, and transfers the StP-metal complex to the membrane-bound permease (PubMed:23279021, PubMed:29581261). Binds one molecule of StP/metal. Binds StP/Co(2+) and StP/Ni(2+) tighter than StP/Zn(2+) (PubMed:29581261). Plays a major role in nickel/cobalt import in zinc-depleted conditions. Contributes to virulence. Required for full urease activity in vitro (PubMed:23279021).</text>
</comment>
<comment type="activity regulation">
    <text evidence="2">Nickel/cobalt import is reduced in the presence of zinc.</text>
</comment>
<comment type="subunit">
    <text evidence="8 9">The complex is composed of two ATP-binding proteins (CntD and CntF), two transmembrane proteins (CntB and CntC) and a solute-binding protein (CntA).</text>
</comment>
<comment type="subcellular location">
    <subcellularLocation>
        <location evidence="1">Cell membrane</location>
        <topology evidence="1">Lipid-anchor</topology>
    </subcellularLocation>
</comment>
<comment type="induction">
    <text evidence="2">Repressed by zinc.</text>
</comment>
<comment type="domain">
    <text evidence="3">StP/metal binding triggers a notable interdomain conformational change.</text>
</comment>
<comment type="disruption phenotype">
    <text evidence="2 4">Deletion of the cntABCDF genes decreases nickel and cobalt intracellular levels and decreases virulence (PubMed:23279021). Insertion mutant shows attenuated growth in several infection models (PubMed:9791183).</text>
</comment>
<comment type="similarity">
    <text evidence="7">Belongs to the bacterial solute-binding protein 5 family.</text>
</comment>
<reference key="1">
    <citation type="book" date="2006" name="Gram positive pathogens, 2nd edition">
        <title>The Staphylococcus aureus NCTC 8325 genome.</title>
        <editorList>
            <person name="Fischetti V."/>
            <person name="Novick R."/>
            <person name="Ferretti J."/>
            <person name="Portnoy D."/>
            <person name="Rood J."/>
        </editorList>
        <authorList>
            <person name="Gillaspy A.F."/>
            <person name="Worrell V."/>
            <person name="Orvis J."/>
            <person name="Roe B.A."/>
            <person name="Dyer D.W."/>
            <person name="Iandolo J.J."/>
        </authorList>
    </citation>
    <scope>NUCLEOTIDE SEQUENCE [LARGE SCALE GENOMIC DNA]</scope>
    <source>
        <strain>NCTC 8325 / PS 47</strain>
    </source>
</reference>
<reference key="2">
    <citation type="journal article" date="1998" name="Mol. Microbiol.">
        <title>Staphylococcus aureus genetic loci impacting growth and survival in multiple infection environments.</title>
        <authorList>
            <person name="Coulter S.N."/>
            <person name="Schwan W.R."/>
            <person name="Ng E.Y.W."/>
            <person name="Langhorne M.H."/>
            <person name="Ritchie H.D."/>
            <person name="Westbrock-Wadman S."/>
            <person name="Hufnagle W.O."/>
            <person name="Folger K.R."/>
            <person name="Bayer A.S."/>
            <person name="Stover C.K."/>
        </authorList>
    </citation>
    <scope>NUCLEOTIDE SEQUENCE [GENOMIC DNA] OF 26-532</scope>
    <scope>DISRUPTION PHENOTYPE</scope>
</reference>
<reference key="3">
    <citation type="journal article" date="2013" name="Mol. Microbiol.">
        <title>The Staphylococcus aureus Opp1 ABC transporter imports nickel and cobalt in zinc-depleted conditions and contributes to virulence.</title>
        <authorList>
            <person name="Remy L."/>
            <person name="Carriere M."/>
            <person name="Derre-Bobillot A."/>
            <person name="Martini C."/>
            <person name="Sanguinetti M."/>
            <person name="Borezee-Durant E."/>
        </authorList>
    </citation>
    <scope>FUNCTION</scope>
    <scope>ACTIVITY REGULATION</scope>
    <scope>SUBUNIT</scope>
    <scope>INDUCTION</scope>
    <scope>DISRUPTION PHENOTYPE</scope>
    <source>
        <strain>RN6390</strain>
    </source>
</reference>
<reference evidence="11 12 13 14" key="4">
    <citation type="journal article" date="2018" name="Proc. Natl. Acad. Sci. U.S.A.">
        <title>Mechanistic insights into staphylopine-mediated metal acquisition.</title>
        <authorList>
            <person name="Song L."/>
            <person name="Zhang Y."/>
            <person name="Chen W."/>
            <person name="Gu T."/>
            <person name="Zhang S.Y."/>
            <person name="Ji Q."/>
        </authorList>
    </citation>
    <scope>X-RAY CRYSTALLOGRAPHY (2.03 ANGSTROMS) OF 26-532 OF APOPROTEIN AND IN COMPLEXES WITH STAPHYLOPINE; NICKEL; COBALT AND ZINC</scope>
    <scope>FUNCTION</scope>
    <scope>SUBUNIT</scope>
    <scope>DOMAIN</scope>
    <scope>MUTAGENESIS OF TYR-52; TRP-128; ARG-165; ARG-250; ARG-418; TRP-431; TYR-435; ASN-448 AND TYR-522</scope>
</reference>